<dbReference type="EC" id="2.7.1.12"/>
<dbReference type="EMBL" id="Z49701">
    <property type="protein sequence ID" value="CAA89734.1"/>
    <property type="molecule type" value="Genomic_DNA"/>
</dbReference>
<dbReference type="EMBL" id="BK006938">
    <property type="protein sequence ID" value="DAA12089.1"/>
    <property type="molecule type" value="Genomic_DNA"/>
</dbReference>
<dbReference type="PIR" id="S54544">
    <property type="entry name" value="S54544"/>
</dbReference>
<dbReference type="RefSeq" id="NP_010534.1">
    <property type="nucleotide sequence ID" value="NM_001180556.1"/>
</dbReference>
<dbReference type="SMR" id="Q03786"/>
<dbReference type="BioGRID" id="32299">
    <property type="interactions" value="171"/>
</dbReference>
<dbReference type="FunCoup" id="Q03786">
    <property type="interactions" value="1377"/>
</dbReference>
<dbReference type="MINT" id="Q03786"/>
<dbReference type="STRING" id="4932.YDR248C"/>
<dbReference type="PaxDb" id="4932-YDR248C"/>
<dbReference type="PeptideAtlas" id="Q03786"/>
<dbReference type="EnsemblFungi" id="YDR248C_mRNA">
    <property type="protein sequence ID" value="YDR248C"/>
    <property type="gene ID" value="YDR248C"/>
</dbReference>
<dbReference type="GeneID" id="851835"/>
<dbReference type="KEGG" id="sce:YDR248C"/>
<dbReference type="AGR" id="SGD:S000002656"/>
<dbReference type="SGD" id="S000002656">
    <property type="gene designation" value="YDR248C"/>
</dbReference>
<dbReference type="VEuPathDB" id="FungiDB:YDR248C"/>
<dbReference type="eggNOG" id="KOG3354">
    <property type="taxonomic scope" value="Eukaryota"/>
</dbReference>
<dbReference type="GeneTree" id="ENSGT00390000003364"/>
<dbReference type="HOGENOM" id="CLU_077168_4_0_1"/>
<dbReference type="InParanoid" id="Q03786"/>
<dbReference type="OMA" id="YEGDDYH"/>
<dbReference type="OrthoDB" id="275177at2759"/>
<dbReference type="BioCyc" id="YEAST:G3O-29821-MONOMER"/>
<dbReference type="UniPathway" id="UPA00792"/>
<dbReference type="BioGRID-ORCS" id="851835">
    <property type="hits" value="0 hits in 10 CRISPR screens"/>
</dbReference>
<dbReference type="PRO" id="PR:Q03786"/>
<dbReference type="Proteomes" id="UP000002311">
    <property type="component" value="Chromosome IV"/>
</dbReference>
<dbReference type="RNAct" id="Q03786">
    <property type="molecule type" value="protein"/>
</dbReference>
<dbReference type="GO" id="GO:0005737">
    <property type="term" value="C:cytoplasm"/>
    <property type="evidence" value="ECO:0007005"/>
    <property type="project" value="SGD"/>
</dbReference>
<dbReference type="GO" id="GO:0000324">
    <property type="term" value="C:fungal-type vacuole"/>
    <property type="evidence" value="ECO:0007005"/>
    <property type="project" value="SGD"/>
</dbReference>
<dbReference type="GO" id="GO:0005524">
    <property type="term" value="F:ATP binding"/>
    <property type="evidence" value="ECO:0007669"/>
    <property type="project" value="UniProtKB-KW"/>
</dbReference>
<dbReference type="GO" id="GO:0046316">
    <property type="term" value="F:gluconokinase activity"/>
    <property type="evidence" value="ECO:0000314"/>
    <property type="project" value="SGD"/>
</dbReference>
<dbReference type="GO" id="GO:0019521">
    <property type="term" value="P:D-gluconate metabolic process"/>
    <property type="evidence" value="ECO:0007669"/>
    <property type="project" value="UniProtKB-KW"/>
</dbReference>
<dbReference type="CDD" id="cd02021">
    <property type="entry name" value="GntK"/>
    <property type="match status" value="1"/>
</dbReference>
<dbReference type="FunFam" id="3.40.50.300:FF:002627">
    <property type="entry name" value="Gluconokinase"/>
    <property type="match status" value="1"/>
</dbReference>
<dbReference type="Gene3D" id="3.40.50.300">
    <property type="entry name" value="P-loop containing nucleotide triphosphate hydrolases"/>
    <property type="match status" value="1"/>
</dbReference>
<dbReference type="InterPro" id="IPR027417">
    <property type="entry name" value="P-loop_NTPase"/>
</dbReference>
<dbReference type="InterPro" id="IPR006001">
    <property type="entry name" value="Therm_gnt_kin"/>
</dbReference>
<dbReference type="NCBIfam" id="TIGR01313">
    <property type="entry name" value="therm_gnt_kin"/>
    <property type="match status" value="1"/>
</dbReference>
<dbReference type="PANTHER" id="PTHR43442">
    <property type="entry name" value="GLUCONOKINASE-RELATED"/>
    <property type="match status" value="1"/>
</dbReference>
<dbReference type="PANTHER" id="PTHR43442:SF3">
    <property type="entry name" value="GLUCONOKINASE-RELATED"/>
    <property type="match status" value="1"/>
</dbReference>
<dbReference type="Pfam" id="PF01583">
    <property type="entry name" value="APS_kinase"/>
    <property type="match status" value="1"/>
</dbReference>
<dbReference type="SUPFAM" id="SSF52540">
    <property type="entry name" value="P-loop containing nucleoside triphosphate hydrolases"/>
    <property type="match status" value="1"/>
</dbReference>
<proteinExistence type="evidence at protein level"/>
<keyword id="KW-0067">ATP-binding</keyword>
<keyword id="KW-0963">Cytoplasm</keyword>
<keyword id="KW-0311">Gluconate utilization</keyword>
<keyword id="KW-0418">Kinase</keyword>
<keyword id="KW-0547">Nucleotide-binding</keyword>
<keyword id="KW-1185">Reference proteome</keyword>
<keyword id="KW-0808">Transferase</keyword>
<protein>
    <recommendedName>
        <fullName>Probable gluconokinase</fullName>
        <ecNumber>2.7.1.12</ecNumber>
    </recommendedName>
    <alternativeName>
        <fullName>Gluconate kinase</fullName>
    </alternativeName>
</protein>
<gene>
    <name type="ordered locus">YDR248C</name>
</gene>
<comment type="catalytic activity">
    <reaction>
        <text>D-gluconate + ATP = 6-phospho-D-gluconate + ADP + H(+)</text>
        <dbReference type="Rhea" id="RHEA:19433"/>
        <dbReference type="ChEBI" id="CHEBI:15378"/>
        <dbReference type="ChEBI" id="CHEBI:18391"/>
        <dbReference type="ChEBI" id="CHEBI:30616"/>
        <dbReference type="ChEBI" id="CHEBI:58759"/>
        <dbReference type="ChEBI" id="CHEBI:456216"/>
        <dbReference type="EC" id="2.7.1.12"/>
    </reaction>
</comment>
<comment type="pathway">
    <text>Carbohydrate acid metabolism; D-gluconate degradation.</text>
</comment>
<comment type="subcellular location">
    <subcellularLocation>
        <location evidence="2">Cytoplasm</location>
    </subcellularLocation>
</comment>
<comment type="miscellaneous">
    <text evidence="3">Present with 504 molecules/cell in log phase SD medium.</text>
</comment>
<comment type="similarity">
    <text evidence="4">Belongs to the gluconokinase GntK/GntV family.</text>
</comment>
<reference key="1">
    <citation type="journal article" date="1997" name="Nature">
        <title>The nucleotide sequence of Saccharomyces cerevisiae chromosome IV.</title>
        <authorList>
            <person name="Jacq C."/>
            <person name="Alt-Moerbe J."/>
            <person name="Andre B."/>
            <person name="Arnold W."/>
            <person name="Bahr A."/>
            <person name="Ballesta J.P.G."/>
            <person name="Bargues M."/>
            <person name="Baron L."/>
            <person name="Becker A."/>
            <person name="Biteau N."/>
            <person name="Bloecker H."/>
            <person name="Blugeon C."/>
            <person name="Boskovic J."/>
            <person name="Brandt P."/>
            <person name="Brueckner M."/>
            <person name="Buitrago M.J."/>
            <person name="Coster F."/>
            <person name="Delaveau T."/>
            <person name="del Rey F."/>
            <person name="Dujon B."/>
            <person name="Eide L.G."/>
            <person name="Garcia-Cantalejo J.M."/>
            <person name="Goffeau A."/>
            <person name="Gomez-Peris A."/>
            <person name="Granotier C."/>
            <person name="Hanemann V."/>
            <person name="Hankeln T."/>
            <person name="Hoheisel J.D."/>
            <person name="Jaeger W."/>
            <person name="Jimenez A."/>
            <person name="Jonniaux J.-L."/>
            <person name="Kraemer C."/>
            <person name="Kuester H."/>
            <person name="Laamanen P."/>
            <person name="Legros Y."/>
            <person name="Louis E.J."/>
            <person name="Moeller-Rieker S."/>
            <person name="Monnet A."/>
            <person name="Moro M."/>
            <person name="Mueller-Auer S."/>
            <person name="Nussbaumer B."/>
            <person name="Paricio N."/>
            <person name="Paulin L."/>
            <person name="Perea J."/>
            <person name="Perez-Alonso M."/>
            <person name="Perez-Ortin J.E."/>
            <person name="Pohl T.M."/>
            <person name="Prydz H."/>
            <person name="Purnelle B."/>
            <person name="Rasmussen S.W."/>
            <person name="Remacha M.A."/>
            <person name="Revuelta J.L."/>
            <person name="Rieger M."/>
            <person name="Salom D."/>
            <person name="Saluz H.P."/>
            <person name="Saiz J.E."/>
            <person name="Saren A.-M."/>
            <person name="Schaefer M."/>
            <person name="Scharfe M."/>
            <person name="Schmidt E.R."/>
            <person name="Schneider C."/>
            <person name="Scholler P."/>
            <person name="Schwarz S."/>
            <person name="Soler-Mira A."/>
            <person name="Urrestarazu L.A."/>
            <person name="Verhasselt P."/>
            <person name="Vissers S."/>
            <person name="Voet M."/>
            <person name="Volckaert G."/>
            <person name="Wagner G."/>
            <person name="Wambutt R."/>
            <person name="Wedler E."/>
            <person name="Wedler H."/>
            <person name="Woelfl S."/>
            <person name="Harris D.E."/>
            <person name="Bowman S."/>
            <person name="Brown D."/>
            <person name="Churcher C.M."/>
            <person name="Connor R."/>
            <person name="Dedman K."/>
            <person name="Gentles S."/>
            <person name="Hamlin N."/>
            <person name="Hunt S."/>
            <person name="Jones L."/>
            <person name="McDonald S."/>
            <person name="Murphy L.D."/>
            <person name="Niblett D."/>
            <person name="Odell C."/>
            <person name="Oliver K."/>
            <person name="Rajandream M.A."/>
            <person name="Richards C."/>
            <person name="Shore L."/>
            <person name="Walsh S.V."/>
            <person name="Barrell B.G."/>
            <person name="Dietrich F.S."/>
            <person name="Mulligan J.T."/>
            <person name="Allen E."/>
            <person name="Araujo R."/>
            <person name="Aviles E."/>
            <person name="Berno A."/>
            <person name="Carpenter J."/>
            <person name="Chen E."/>
            <person name="Cherry J.M."/>
            <person name="Chung E."/>
            <person name="Duncan M."/>
            <person name="Hunicke-Smith S."/>
            <person name="Hyman R.W."/>
            <person name="Komp C."/>
            <person name="Lashkari D."/>
            <person name="Lew H."/>
            <person name="Lin D."/>
            <person name="Mosedale D."/>
            <person name="Nakahara K."/>
            <person name="Namath A."/>
            <person name="Oefner P."/>
            <person name="Oh C."/>
            <person name="Petel F.X."/>
            <person name="Roberts D."/>
            <person name="Schramm S."/>
            <person name="Schroeder M."/>
            <person name="Shogren T."/>
            <person name="Shroff N."/>
            <person name="Winant A."/>
            <person name="Yelton M.A."/>
            <person name="Botstein D."/>
            <person name="Davis R.W."/>
            <person name="Johnston M."/>
            <person name="Andrews S."/>
            <person name="Brinkman R."/>
            <person name="Cooper J."/>
            <person name="Ding H."/>
            <person name="Du Z."/>
            <person name="Favello A."/>
            <person name="Fulton L."/>
            <person name="Gattung S."/>
            <person name="Greco T."/>
            <person name="Hallsworth K."/>
            <person name="Hawkins J."/>
            <person name="Hillier L.W."/>
            <person name="Jier M."/>
            <person name="Johnson D."/>
            <person name="Johnston L."/>
            <person name="Kirsten J."/>
            <person name="Kucaba T."/>
            <person name="Langston Y."/>
            <person name="Latreille P."/>
            <person name="Le T."/>
            <person name="Mardis E."/>
            <person name="Menezes S."/>
            <person name="Miller N."/>
            <person name="Nhan M."/>
            <person name="Pauley A."/>
            <person name="Peluso D."/>
            <person name="Rifkin L."/>
            <person name="Riles L."/>
            <person name="Taich A."/>
            <person name="Trevaskis E."/>
            <person name="Vignati D."/>
            <person name="Wilcox L."/>
            <person name="Wohldman P."/>
            <person name="Vaudin M."/>
            <person name="Wilson R."/>
            <person name="Waterston R."/>
            <person name="Albermann K."/>
            <person name="Hani J."/>
            <person name="Heumann K."/>
            <person name="Kleine K."/>
            <person name="Mewes H.-W."/>
            <person name="Zollner A."/>
            <person name="Zaccaria P."/>
        </authorList>
    </citation>
    <scope>NUCLEOTIDE SEQUENCE [LARGE SCALE GENOMIC DNA]</scope>
    <source>
        <strain>ATCC 204508 / S288c</strain>
    </source>
</reference>
<reference key="2">
    <citation type="journal article" date="2014" name="G3 (Bethesda)">
        <title>The reference genome sequence of Saccharomyces cerevisiae: Then and now.</title>
        <authorList>
            <person name="Engel S.R."/>
            <person name="Dietrich F.S."/>
            <person name="Fisk D.G."/>
            <person name="Binkley G."/>
            <person name="Balakrishnan R."/>
            <person name="Costanzo M.C."/>
            <person name="Dwight S.S."/>
            <person name="Hitz B.C."/>
            <person name="Karra K."/>
            <person name="Nash R.S."/>
            <person name="Weng S."/>
            <person name="Wong E.D."/>
            <person name="Lloyd P."/>
            <person name="Skrzypek M.S."/>
            <person name="Miyasato S.R."/>
            <person name="Simison M."/>
            <person name="Cherry J.M."/>
        </authorList>
    </citation>
    <scope>GENOME REANNOTATION</scope>
    <source>
        <strain>ATCC 204508 / S288c</strain>
    </source>
</reference>
<reference key="3">
    <citation type="journal article" date="2003" name="Nature">
        <title>Global analysis of protein localization in budding yeast.</title>
        <authorList>
            <person name="Huh W.-K."/>
            <person name="Falvo J.V."/>
            <person name="Gerke L.C."/>
            <person name="Carroll A.S."/>
            <person name="Howson R.W."/>
            <person name="Weissman J.S."/>
            <person name="O'Shea E.K."/>
        </authorList>
    </citation>
    <scope>SUBCELLULAR LOCATION [LARGE SCALE ANALYSIS]</scope>
</reference>
<reference key="4">
    <citation type="journal article" date="2003" name="Nature">
        <title>Global analysis of protein expression in yeast.</title>
        <authorList>
            <person name="Ghaemmaghami S."/>
            <person name="Huh W.-K."/>
            <person name="Bower K."/>
            <person name="Howson R.W."/>
            <person name="Belle A."/>
            <person name="Dephoure N."/>
            <person name="O'Shea E.K."/>
            <person name="Weissman J.S."/>
        </authorList>
    </citation>
    <scope>LEVEL OF PROTEIN EXPRESSION [LARGE SCALE ANALYSIS]</scope>
</reference>
<feature type="chain" id="PRO_0000253810" description="Probable gluconokinase">
    <location>
        <begin position="1"/>
        <end position="193"/>
    </location>
</feature>
<feature type="binding site" evidence="1">
    <location>
        <begin position="18"/>
        <end position="25"/>
    </location>
    <ligand>
        <name>ATP</name>
        <dbReference type="ChEBI" id="CHEBI:30616"/>
    </ligand>
</feature>
<evidence type="ECO:0000255" key="1"/>
<evidence type="ECO:0000269" key="2">
    <source>
    </source>
</evidence>
<evidence type="ECO:0000269" key="3">
    <source>
    </source>
</evidence>
<evidence type="ECO:0000305" key="4"/>
<accession>Q03786</accession>
<accession>D6VSM9</accession>
<organism>
    <name type="scientific">Saccharomyces cerevisiae (strain ATCC 204508 / S288c)</name>
    <name type="common">Baker's yeast</name>
    <dbReference type="NCBI Taxonomy" id="559292"/>
    <lineage>
        <taxon>Eukaryota</taxon>
        <taxon>Fungi</taxon>
        <taxon>Dikarya</taxon>
        <taxon>Ascomycota</taxon>
        <taxon>Saccharomycotina</taxon>
        <taxon>Saccharomycetes</taxon>
        <taxon>Saccharomycetales</taxon>
        <taxon>Saccharomycetaceae</taxon>
        <taxon>Saccharomyces</taxon>
    </lineage>
</organism>
<sequence>MTEKHKTMGKFKVIVLAGTAGTGKSTIAGELIHEFKDIYPDLKFIEGDDLHPPANVEKMTRGIPLNDDDRWDWLKKVAVESTKAAASTKEHLSIVACSSLKKKYRDLIRHTCPESEFHFIFLYASKIEVLKRLKTRKGHFMKADMMESQFRDLELPDINDETDCDIVPLDFKTFYQIEKDVIQVVKSKVLNIE</sequence>
<name>GNTK_YEAST</name>